<organism>
    <name type="scientific">Mus musculus</name>
    <name type="common">Mouse</name>
    <dbReference type="NCBI Taxonomy" id="10090"/>
    <lineage>
        <taxon>Eukaryota</taxon>
        <taxon>Metazoa</taxon>
        <taxon>Chordata</taxon>
        <taxon>Craniata</taxon>
        <taxon>Vertebrata</taxon>
        <taxon>Euteleostomi</taxon>
        <taxon>Mammalia</taxon>
        <taxon>Eutheria</taxon>
        <taxon>Euarchontoglires</taxon>
        <taxon>Glires</taxon>
        <taxon>Rodentia</taxon>
        <taxon>Myomorpha</taxon>
        <taxon>Muroidea</taxon>
        <taxon>Muridae</taxon>
        <taxon>Murinae</taxon>
        <taxon>Mus</taxon>
        <taxon>Mus</taxon>
    </lineage>
</organism>
<name>RHG24_MOUSE</name>
<reference key="1">
    <citation type="journal article" date="2005" name="Science">
        <title>The transcriptional landscape of the mammalian genome.</title>
        <authorList>
            <person name="Carninci P."/>
            <person name="Kasukawa T."/>
            <person name="Katayama S."/>
            <person name="Gough J."/>
            <person name="Frith M.C."/>
            <person name="Maeda N."/>
            <person name="Oyama R."/>
            <person name="Ravasi T."/>
            <person name="Lenhard B."/>
            <person name="Wells C."/>
            <person name="Kodzius R."/>
            <person name="Shimokawa K."/>
            <person name="Bajic V.B."/>
            <person name="Brenner S.E."/>
            <person name="Batalov S."/>
            <person name="Forrest A.R."/>
            <person name="Zavolan M."/>
            <person name="Davis M.J."/>
            <person name="Wilming L.G."/>
            <person name="Aidinis V."/>
            <person name="Allen J.E."/>
            <person name="Ambesi-Impiombato A."/>
            <person name="Apweiler R."/>
            <person name="Aturaliya R.N."/>
            <person name="Bailey T.L."/>
            <person name="Bansal M."/>
            <person name="Baxter L."/>
            <person name="Beisel K.W."/>
            <person name="Bersano T."/>
            <person name="Bono H."/>
            <person name="Chalk A.M."/>
            <person name="Chiu K.P."/>
            <person name="Choudhary V."/>
            <person name="Christoffels A."/>
            <person name="Clutterbuck D.R."/>
            <person name="Crowe M.L."/>
            <person name="Dalla E."/>
            <person name="Dalrymple B.P."/>
            <person name="de Bono B."/>
            <person name="Della Gatta G."/>
            <person name="di Bernardo D."/>
            <person name="Down T."/>
            <person name="Engstrom P."/>
            <person name="Fagiolini M."/>
            <person name="Faulkner G."/>
            <person name="Fletcher C.F."/>
            <person name="Fukushima T."/>
            <person name="Furuno M."/>
            <person name="Futaki S."/>
            <person name="Gariboldi M."/>
            <person name="Georgii-Hemming P."/>
            <person name="Gingeras T.R."/>
            <person name="Gojobori T."/>
            <person name="Green R.E."/>
            <person name="Gustincich S."/>
            <person name="Harbers M."/>
            <person name="Hayashi Y."/>
            <person name="Hensch T.K."/>
            <person name="Hirokawa N."/>
            <person name="Hill D."/>
            <person name="Huminiecki L."/>
            <person name="Iacono M."/>
            <person name="Ikeo K."/>
            <person name="Iwama A."/>
            <person name="Ishikawa T."/>
            <person name="Jakt M."/>
            <person name="Kanapin A."/>
            <person name="Katoh M."/>
            <person name="Kawasawa Y."/>
            <person name="Kelso J."/>
            <person name="Kitamura H."/>
            <person name="Kitano H."/>
            <person name="Kollias G."/>
            <person name="Krishnan S.P."/>
            <person name="Kruger A."/>
            <person name="Kummerfeld S.K."/>
            <person name="Kurochkin I.V."/>
            <person name="Lareau L.F."/>
            <person name="Lazarevic D."/>
            <person name="Lipovich L."/>
            <person name="Liu J."/>
            <person name="Liuni S."/>
            <person name="McWilliam S."/>
            <person name="Madan Babu M."/>
            <person name="Madera M."/>
            <person name="Marchionni L."/>
            <person name="Matsuda H."/>
            <person name="Matsuzawa S."/>
            <person name="Miki H."/>
            <person name="Mignone F."/>
            <person name="Miyake S."/>
            <person name="Morris K."/>
            <person name="Mottagui-Tabar S."/>
            <person name="Mulder N."/>
            <person name="Nakano N."/>
            <person name="Nakauchi H."/>
            <person name="Ng P."/>
            <person name="Nilsson R."/>
            <person name="Nishiguchi S."/>
            <person name="Nishikawa S."/>
            <person name="Nori F."/>
            <person name="Ohara O."/>
            <person name="Okazaki Y."/>
            <person name="Orlando V."/>
            <person name="Pang K.C."/>
            <person name="Pavan W.J."/>
            <person name="Pavesi G."/>
            <person name="Pesole G."/>
            <person name="Petrovsky N."/>
            <person name="Piazza S."/>
            <person name="Reed J."/>
            <person name="Reid J.F."/>
            <person name="Ring B.Z."/>
            <person name="Ringwald M."/>
            <person name="Rost B."/>
            <person name="Ruan Y."/>
            <person name="Salzberg S.L."/>
            <person name="Sandelin A."/>
            <person name="Schneider C."/>
            <person name="Schoenbach C."/>
            <person name="Sekiguchi K."/>
            <person name="Semple C.A."/>
            <person name="Seno S."/>
            <person name="Sessa L."/>
            <person name="Sheng Y."/>
            <person name="Shibata Y."/>
            <person name="Shimada H."/>
            <person name="Shimada K."/>
            <person name="Silva D."/>
            <person name="Sinclair B."/>
            <person name="Sperling S."/>
            <person name="Stupka E."/>
            <person name="Sugiura K."/>
            <person name="Sultana R."/>
            <person name="Takenaka Y."/>
            <person name="Taki K."/>
            <person name="Tammoja K."/>
            <person name="Tan S.L."/>
            <person name="Tang S."/>
            <person name="Taylor M.S."/>
            <person name="Tegner J."/>
            <person name="Teichmann S.A."/>
            <person name="Ueda H.R."/>
            <person name="van Nimwegen E."/>
            <person name="Verardo R."/>
            <person name="Wei C.L."/>
            <person name="Yagi K."/>
            <person name="Yamanishi H."/>
            <person name="Zabarovsky E."/>
            <person name="Zhu S."/>
            <person name="Zimmer A."/>
            <person name="Hide W."/>
            <person name="Bult C."/>
            <person name="Grimmond S.M."/>
            <person name="Teasdale R.D."/>
            <person name="Liu E.T."/>
            <person name="Brusic V."/>
            <person name="Quackenbush J."/>
            <person name="Wahlestedt C."/>
            <person name="Mattick J.S."/>
            <person name="Hume D.A."/>
            <person name="Kai C."/>
            <person name="Sasaki D."/>
            <person name="Tomaru Y."/>
            <person name="Fukuda S."/>
            <person name="Kanamori-Katayama M."/>
            <person name="Suzuki M."/>
            <person name="Aoki J."/>
            <person name="Arakawa T."/>
            <person name="Iida J."/>
            <person name="Imamura K."/>
            <person name="Itoh M."/>
            <person name="Kato T."/>
            <person name="Kawaji H."/>
            <person name="Kawagashira N."/>
            <person name="Kawashima T."/>
            <person name="Kojima M."/>
            <person name="Kondo S."/>
            <person name="Konno H."/>
            <person name="Nakano K."/>
            <person name="Ninomiya N."/>
            <person name="Nishio T."/>
            <person name="Okada M."/>
            <person name="Plessy C."/>
            <person name="Shibata K."/>
            <person name="Shiraki T."/>
            <person name="Suzuki S."/>
            <person name="Tagami M."/>
            <person name="Waki K."/>
            <person name="Watahiki A."/>
            <person name="Okamura-Oho Y."/>
            <person name="Suzuki H."/>
            <person name="Kawai J."/>
            <person name="Hayashizaki Y."/>
        </authorList>
    </citation>
    <scope>NUCLEOTIDE SEQUENCE [LARGE SCALE MRNA] (ISOFORM 1)</scope>
    <scope>NUCLEOTIDE SEQUENCE [LARGE SCALE MRNA] OF 1-358 (ISOFORM 2)</scope>
    <source>
        <strain>C57BL/6J</strain>
        <tissue>Medulla oblongata</tissue>
        <tissue>Spinal cord</tissue>
    </source>
</reference>
<reference key="2">
    <citation type="journal article" date="2004" name="Genome Res.">
        <title>The status, quality, and expansion of the NIH full-length cDNA project: the Mammalian Gene Collection (MGC).</title>
        <authorList>
            <consortium name="The MGC Project Team"/>
        </authorList>
    </citation>
    <scope>NUCLEOTIDE SEQUENCE [LARGE SCALE MRNA] (ISOFORM 3)</scope>
    <source>
        <strain>FVB/N</strain>
        <tissue>Eye</tissue>
        <tissue>Kidney</tissue>
        <tissue>Mammary tumor</tissue>
    </source>
</reference>
<reference key="3">
    <citation type="journal article" date="2007" name="Proc. Natl. Acad. Sci. U.S.A.">
        <title>Large-scale phosphorylation analysis of mouse liver.</title>
        <authorList>
            <person name="Villen J."/>
            <person name="Beausoleil S.A."/>
            <person name="Gerber S.A."/>
            <person name="Gygi S.P."/>
        </authorList>
    </citation>
    <scope>PHOSPHORYLATION [LARGE SCALE ANALYSIS] AT SER-390</scope>
    <scope>IDENTIFICATION BY MASS SPECTROMETRY [LARGE SCALE ANALYSIS]</scope>
    <source>
        <tissue>Liver</tissue>
    </source>
</reference>
<reference key="4">
    <citation type="journal article" date="2010" name="Cell">
        <title>A tissue-specific atlas of mouse protein phosphorylation and expression.</title>
        <authorList>
            <person name="Huttlin E.L."/>
            <person name="Jedrychowski M.P."/>
            <person name="Elias J.E."/>
            <person name="Goswami T."/>
            <person name="Rad R."/>
            <person name="Beausoleil S.A."/>
            <person name="Villen J."/>
            <person name="Haas W."/>
            <person name="Sowa M.E."/>
            <person name="Gygi S.P."/>
        </authorList>
    </citation>
    <scope>PHOSPHORYLATION [LARGE SCALE ANALYSIS] AT SER-390; SER-395; SER-397 AND SER-494</scope>
    <scope>IDENTIFICATION BY MASS SPECTROMETRY [LARGE SCALE ANALYSIS]</scope>
    <source>
        <tissue>Kidney</tissue>
        <tissue>Lung</tissue>
        <tissue>Pancreas</tissue>
    </source>
</reference>
<gene>
    <name type="primary">Arhgap24</name>
</gene>
<accession>Q8C4V1</accession>
<accession>Q8CA50</accession>
<accession>Q8QZZ0</accession>
<protein>
    <recommendedName>
        <fullName>Rho GTPase-activating protein 24</fullName>
    </recommendedName>
    <alternativeName>
        <fullName>Rho-type GTPase-activating protein 24</fullName>
    </alternativeName>
</protein>
<feature type="chain" id="PRO_0000280474" description="Rho GTPase-activating protein 24">
    <location>
        <begin position="1"/>
        <end position="747"/>
    </location>
</feature>
<feature type="domain" description="PH" evidence="5">
    <location>
        <begin position="17"/>
        <end position="123"/>
    </location>
</feature>
<feature type="domain" description="Rho-GAP" evidence="6">
    <location>
        <begin position="133"/>
        <end position="327"/>
    </location>
</feature>
<feature type="region of interest" description="Disordered" evidence="7">
    <location>
        <begin position="1"/>
        <end position="20"/>
    </location>
</feature>
<feature type="region of interest" description="Disordered" evidence="7">
    <location>
        <begin position="327"/>
        <end position="475"/>
    </location>
</feature>
<feature type="region of interest" description="Disordered" evidence="7">
    <location>
        <begin position="581"/>
        <end position="639"/>
    </location>
</feature>
<feature type="coiled-coil region" evidence="4">
    <location>
        <begin position="648"/>
        <end position="728"/>
    </location>
</feature>
<feature type="compositionally biased region" description="Polar residues" evidence="7">
    <location>
        <begin position="334"/>
        <end position="346"/>
    </location>
</feature>
<feature type="compositionally biased region" description="Polar residues" evidence="7">
    <location>
        <begin position="355"/>
        <end position="367"/>
    </location>
</feature>
<feature type="compositionally biased region" description="Basic and acidic residues" evidence="7">
    <location>
        <begin position="368"/>
        <end position="380"/>
    </location>
</feature>
<feature type="compositionally biased region" description="Polar residues" evidence="7">
    <location>
        <begin position="381"/>
        <end position="404"/>
    </location>
</feature>
<feature type="compositionally biased region" description="Polar residues" evidence="7">
    <location>
        <begin position="431"/>
        <end position="475"/>
    </location>
</feature>
<feature type="compositionally biased region" description="Basic and acidic residues" evidence="7">
    <location>
        <begin position="599"/>
        <end position="614"/>
    </location>
</feature>
<feature type="compositionally biased region" description="Low complexity" evidence="7">
    <location>
        <begin position="616"/>
        <end position="629"/>
    </location>
</feature>
<feature type="compositionally biased region" description="Polar residues" evidence="7">
    <location>
        <begin position="630"/>
        <end position="639"/>
    </location>
</feature>
<feature type="site" description="Arginine finger; crucial for GTP hydrolysis by stabilizing the transition state" evidence="6">
    <location>
        <position position="173"/>
    </location>
</feature>
<feature type="modified residue" description="Phosphoserine" evidence="2">
    <location>
        <position position="368"/>
    </location>
</feature>
<feature type="modified residue" description="Phosphoserine" evidence="11 12">
    <location>
        <position position="390"/>
    </location>
</feature>
<feature type="modified residue" description="Phosphoserine" evidence="12">
    <location>
        <position position="395"/>
    </location>
</feature>
<feature type="modified residue" description="Phosphoserine" evidence="12">
    <location>
        <position position="397"/>
    </location>
</feature>
<feature type="modified residue" description="Phosphoserine" evidence="3">
    <location>
        <position position="401"/>
    </location>
</feature>
<feature type="modified residue" description="Phosphoserine" evidence="3">
    <location>
        <position position="412"/>
    </location>
</feature>
<feature type="modified residue" description="Phosphoserine" evidence="3">
    <location>
        <position position="414"/>
    </location>
</feature>
<feature type="modified residue" description="Phosphoserine" evidence="3">
    <location>
        <position position="436"/>
    </location>
</feature>
<feature type="modified residue" description="Phosphothreonine" evidence="3">
    <location>
        <position position="451"/>
    </location>
</feature>
<feature type="modified residue" description="Phosphoserine" evidence="12">
    <location>
        <position position="494"/>
    </location>
</feature>
<feature type="splice variant" id="VSP_023719" description="In isoform 3." evidence="8">
    <location>
        <begin position="1"/>
        <end position="93"/>
    </location>
</feature>
<feature type="splice variant" id="VSP_023720" description="In isoform 2." evidence="9">
    <location>
        <begin position="1"/>
        <end position="91"/>
    </location>
</feature>
<feature type="splice variant" id="VSP_023721" description="In isoform 2." evidence="9">
    <original>DRMTANHESYLLMASTQNDMEDWVKSIRRVIWGPFGG</original>
    <variation>MPEDRNSGGRPSGALASTPFIPKTTYRRIKRCFSFRK</variation>
    <location>
        <begin position="92"/>
        <end position="128"/>
    </location>
</feature>
<feature type="sequence conflict" description="In Ref. 1; BAC38105." evidence="10" ref="1">
    <original>E</original>
    <variation>K</variation>
    <location>
        <position position="183"/>
    </location>
</feature>
<proteinExistence type="evidence at protein level"/>
<keyword id="KW-0025">Alternative splicing</keyword>
<keyword id="KW-0037">Angiogenesis</keyword>
<keyword id="KW-0965">Cell junction</keyword>
<keyword id="KW-0966">Cell projection</keyword>
<keyword id="KW-0175">Coiled coil</keyword>
<keyword id="KW-0963">Cytoplasm</keyword>
<keyword id="KW-0206">Cytoskeleton</keyword>
<keyword id="KW-0217">Developmental protein</keyword>
<keyword id="KW-0221">Differentiation</keyword>
<keyword id="KW-0343">GTPase activation</keyword>
<keyword id="KW-0597">Phosphoprotein</keyword>
<keyword id="KW-1185">Reference proteome</keyword>
<dbReference type="EMBL" id="AK039617">
    <property type="protein sequence ID" value="BAC30402.1"/>
    <property type="status" value="ALT_INIT"/>
    <property type="molecule type" value="mRNA"/>
</dbReference>
<dbReference type="EMBL" id="AK080986">
    <property type="protein sequence ID" value="BAC38105.1"/>
    <property type="molecule type" value="mRNA"/>
</dbReference>
<dbReference type="EMBL" id="BC023344">
    <property type="protein sequence ID" value="AAH23344.1"/>
    <property type="molecule type" value="mRNA"/>
</dbReference>
<dbReference type="EMBL" id="BC025502">
    <property type="protein sequence ID" value="AAH25502.1"/>
    <property type="molecule type" value="mRNA"/>
</dbReference>
<dbReference type="EMBL" id="BC027070">
    <property type="protein sequence ID" value="AAH27070.1"/>
    <property type="molecule type" value="mRNA"/>
</dbReference>
<dbReference type="CCDS" id="CCDS19474.1">
    <molecule id="Q8C4V1-1"/>
</dbReference>
<dbReference type="CCDS" id="CCDS19475.1">
    <molecule id="Q8C4V1-3"/>
</dbReference>
<dbReference type="RefSeq" id="NP_001273397.1">
    <molecule id="Q8C4V1-3"/>
    <property type="nucleotide sequence ID" value="NM_001286468.1"/>
</dbReference>
<dbReference type="RefSeq" id="NP_083546.2">
    <property type="nucleotide sequence ID" value="NM_029270.2"/>
</dbReference>
<dbReference type="RefSeq" id="NP_666273.1">
    <molecule id="Q8C4V1-3"/>
    <property type="nucleotide sequence ID" value="NM_146161.3"/>
</dbReference>
<dbReference type="RefSeq" id="XP_006534954.1">
    <molecule id="Q8C4V1-3"/>
    <property type="nucleotide sequence ID" value="XM_006534891.5"/>
</dbReference>
<dbReference type="RefSeq" id="XP_011247736.1">
    <molecule id="Q8C4V1-3"/>
    <property type="nucleotide sequence ID" value="XM_011249434.3"/>
</dbReference>
<dbReference type="SMR" id="Q8C4V1"/>
<dbReference type="BioGRID" id="231132">
    <property type="interactions" value="4"/>
</dbReference>
<dbReference type="FunCoup" id="Q8C4V1">
    <property type="interactions" value="169"/>
</dbReference>
<dbReference type="IntAct" id="Q8C4V1">
    <property type="interactions" value="1"/>
</dbReference>
<dbReference type="STRING" id="10090.ENSMUSP00000092138"/>
<dbReference type="GlyGen" id="Q8C4V1">
    <property type="glycosylation" value="1 site, 1 O-linked glycan (1 site)"/>
</dbReference>
<dbReference type="iPTMnet" id="Q8C4V1"/>
<dbReference type="PhosphoSitePlus" id="Q8C4V1"/>
<dbReference type="jPOST" id="Q8C4V1"/>
<dbReference type="PaxDb" id="10090-ENSMUSP00000092138"/>
<dbReference type="ProteomicsDB" id="254962">
    <molecule id="Q8C4V1-1"/>
</dbReference>
<dbReference type="ProteomicsDB" id="254963">
    <molecule id="Q8C4V1-2"/>
</dbReference>
<dbReference type="ProteomicsDB" id="254964">
    <molecule id="Q8C4V1-3"/>
</dbReference>
<dbReference type="Pumba" id="Q8C4V1"/>
<dbReference type="Antibodypedia" id="2133">
    <property type="antibodies" value="175 antibodies from 22 providers"/>
</dbReference>
<dbReference type="DNASU" id="231532"/>
<dbReference type="Ensembl" id="ENSMUST00000073302.12">
    <molecule id="Q8C4V1-3"/>
    <property type="protein sequence ID" value="ENSMUSP00000073028.6"/>
    <property type="gene ID" value="ENSMUSG00000057315.15"/>
</dbReference>
<dbReference type="Ensembl" id="ENSMUST00000112852.8">
    <molecule id="Q8C4V1-3"/>
    <property type="protein sequence ID" value="ENSMUSP00000108473.2"/>
    <property type="gene ID" value="ENSMUSG00000057315.15"/>
</dbReference>
<dbReference type="Ensembl" id="ENSMUST00000112853.8">
    <molecule id="Q8C4V1-3"/>
    <property type="protein sequence ID" value="ENSMUSP00000108474.2"/>
    <property type="gene ID" value="ENSMUSG00000057315.15"/>
</dbReference>
<dbReference type="Ensembl" id="ENSMUST00000112854.8">
    <molecule id="Q8C4V1-3"/>
    <property type="protein sequence ID" value="ENSMUSP00000108475.2"/>
    <property type="gene ID" value="ENSMUSG00000057315.15"/>
</dbReference>
<dbReference type="GeneID" id="231532"/>
<dbReference type="KEGG" id="mmu:231532"/>
<dbReference type="UCSC" id="uc008yix.2">
    <molecule id="Q8C4V1-1"/>
    <property type="organism name" value="mouse"/>
</dbReference>
<dbReference type="UCSC" id="uc008yiz.1">
    <molecule id="Q8C4V1-2"/>
    <property type="organism name" value="mouse"/>
</dbReference>
<dbReference type="AGR" id="MGI:1922647"/>
<dbReference type="CTD" id="83478"/>
<dbReference type="MGI" id="MGI:1922647">
    <property type="gene designation" value="Arhgap24"/>
</dbReference>
<dbReference type="VEuPathDB" id="HostDB:ENSMUSG00000057315"/>
<dbReference type="eggNOG" id="KOG4270">
    <property type="taxonomic scope" value="Eukaryota"/>
</dbReference>
<dbReference type="GeneTree" id="ENSGT00950000183015"/>
<dbReference type="HOGENOM" id="CLU_020795_0_0_1"/>
<dbReference type="InParanoid" id="Q8C4V1"/>
<dbReference type="OMA" id="QNAMKCG"/>
<dbReference type="OrthoDB" id="185175at2759"/>
<dbReference type="PhylomeDB" id="Q8C4V1"/>
<dbReference type="Reactome" id="R-MMU-8980692">
    <property type="pathway name" value="RHOA GTPase cycle"/>
</dbReference>
<dbReference type="Reactome" id="R-MMU-9013148">
    <property type="pathway name" value="CDC42 GTPase cycle"/>
</dbReference>
<dbReference type="Reactome" id="R-MMU-9013149">
    <property type="pathway name" value="RAC1 GTPase cycle"/>
</dbReference>
<dbReference type="BioGRID-ORCS" id="231532">
    <property type="hits" value="1 hit in 78 CRISPR screens"/>
</dbReference>
<dbReference type="ChiTaRS" id="Arhgap24">
    <property type="organism name" value="mouse"/>
</dbReference>
<dbReference type="PRO" id="PR:Q8C4V1"/>
<dbReference type="Proteomes" id="UP000000589">
    <property type="component" value="Chromosome 5"/>
</dbReference>
<dbReference type="RNAct" id="Q8C4V1">
    <property type="molecule type" value="protein"/>
</dbReference>
<dbReference type="Bgee" id="ENSMUSG00000057315">
    <property type="expression patterns" value="Expressed in epithelium of lens and 241 other cell types or tissues"/>
</dbReference>
<dbReference type="ExpressionAtlas" id="Q8C4V1">
    <property type="expression patterns" value="baseline and differential"/>
</dbReference>
<dbReference type="GO" id="GO:0005912">
    <property type="term" value="C:adherens junction"/>
    <property type="evidence" value="ECO:0007669"/>
    <property type="project" value="UniProtKB-SubCell"/>
</dbReference>
<dbReference type="GO" id="GO:0042995">
    <property type="term" value="C:cell projection"/>
    <property type="evidence" value="ECO:0007669"/>
    <property type="project" value="UniProtKB-SubCell"/>
</dbReference>
<dbReference type="GO" id="GO:0005737">
    <property type="term" value="C:cytoplasm"/>
    <property type="evidence" value="ECO:0007669"/>
    <property type="project" value="UniProtKB-KW"/>
</dbReference>
<dbReference type="GO" id="GO:0005856">
    <property type="term" value="C:cytoskeleton"/>
    <property type="evidence" value="ECO:0007669"/>
    <property type="project" value="UniProtKB-SubCell"/>
</dbReference>
<dbReference type="GO" id="GO:0005925">
    <property type="term" value="C:focal adhesion"/>
    <property type="evidence" value="ECO:0000314"/>
    <property type="project" value="MGI"/>
</dbReference>
<dbReference type="GO" id="GO:0005096">
    <property type="term" value="F:GTPase activator activity"/>
    <property type="evidence" value="ECO:0000315"/>
    <property type="project" value="MGI"/>
</dbReference>
<dbReference type="GO" id="GO:0001525">
    <property type="term" value="P:angiogenesis"/>
    <property type="evidence" value="ECO:0007669"/>
    <property type="project" value="UniProtKB-KW"/>
</dbReference>
<dbReference type="GO" id="GO:0030154">
    <property type="term" value="P:cell differentiation"/>
    <property type="evidence" value="ECO:0007669"/>
    <property type="project" value="UniProtKB-KW"/>
</dbReference>
<dbReference type="GO" id="GO:0035021">
    <property type="term" value="P:negative regulation of Rac protein signal transduction"/>
    <property type="evidence" value="ECO:0000315"/>
    <property type="project" value="MGI"/>
</dbReference>
<dbReference type="GO" id="GO:1900028">
    <property type="term" value="P:negative regulation of ruffle assembly"/>
    <property type="evidence" value="ECO:0000315"/>
    <property type="project" value="MGI"/>
</dbReference>
<dbReference type="GO" id="GO:0016601">
    <property type="term" value="P:Rac protein signal transduction"/>
    <property type="evidence" value="ECO:0000315"/>
    <property type="project" value="MGI"/>
</dbReference>
<dbReference type="GO" id="GO:0035313">
    <property type="term" value="P:wound healing, spreading of epidermal cells"/>
    <property type="evidence" value="ECO:0000315"/>
    <property type="project" value="MGI"/>
</dbReference>
<dbReference type="CDD" id="cd04390">
    <property type="entry name" value="RhoGAP_ARHGAP22_24_25"/>
    <property type="match status" value="1"/>
</dbReference>
<dbReference type="FunFam" id="2.30.29.30:FF:000286">
    <property type="entry name" value="PH-protein kinase domain containing protein"/>
    <property type="match status" value="1"/>
</dbReference>
<dbReference type="FunFam" id="1.10.555.10:FF:000015">
    <property type="entry name" value="rho GTPase-activating protein 25 isoform X1"/>
    <property type="match status" value="1"/>
</dbReference>
<dbReference type="Gene3D" id="2.30.29.30">
    <property type="entry name" value="Pleckstrin-homology domain (PH domain)/Phosphotyrosine-binding domain (PTB)"/>
    <property type="match status" value="1"/>
</dbReference>
<dbReference type="Gene3D" id="1.10.555.10">
    <property type="entry name" value="Rho GTPase activation protein"/>
    <property type="match status" value="1"/>
</dbReference>
<dbReference type="InterPro" id="IPR011993">
    <property type="entry name" value="PH-like_dom_sf"/>
</dbReference>
<dbReference type="InterPro" id="IPR001849">
    <property type="entry name" value="PH_domain"/>
</dbReference>
<dbReference type="InterPro" id="IPR008936">
    <property type="entry name" value="Rho_GTPase_activation_prot"/>
</dbReference>
<dbReference type="InterPro" id="IPR051025">
    <property type="entry name" value="RhoGAP"/>
</dbReference>
<dbReference type="InterPro" id="IPR000198">
    <property type="entry name" value="RhoGAP_dom"/>
</dbReference>
<dbReference type="PANTHER" id="PTHR15228:SF19">
    <property type="entry name" value="RHO GTPASE-ACTIVATING PROTEIN 24"/>
    <property type="match status" value="1"/>
</dbReference>
<dbReference type="PANTHER" id="PTHR15228">
    <property type="entry name" value="SPERMATHECAL PHYSIOLOGY VARIANT"/>
    <property type="match status" value="1"/>
</dbReference>
<dbReference type="Pfam" id="PF00169">
    <property type="entry name" value="PH"/>
    <property type="match status" value="1"/>
</dbReference>
<dbReference type="Pfam" id="PF00620">
    <property type="entry name" value="RhoGAP"/>
    <property type="match status" value="1"/>
</dbReference>
<dbReference type="SMART" id="SM00233">
    <property type="entry name" value="PH"/>
    <property type="match status" value="1"/>
</dbReference>
<dbReference type="SMART" id="SM00324">
    <property type="entry name" value="RhoGAP"/>
    <property type="match status" value="1"/>
</dbReference>
<dbReference type="SUPFAM" id="SSF48350">
    <property type="entry name" value="GTPase activation domain, GAP"/>
    <property type="match status" value="1"/>
</dbReference>
<dbReference type="SUPFAM" id="SSF50729">
    <property type="entry name" value="PH domain-like"/>
    <property type="match status" value="1"/>
</dbReference>
<dbReference type="PROSITE" id="PS50003">
    <property type="entry name" value="PH_DOMAIN"/>
    <property type="match status" value="1"/>
</dbReference>
<dbReference type="PROSITE" id="PS50238">
    <property type="entry name" value="RHOGAP"/>
    <property type="match status" value="1"/>
</dbReference>
<sequence length="747" mass="84100">MEERCESTESPQGQGRKNTKCGWLRKQGGFVKTWHTRWFVLKGDQLYYFKDEDETKPLGTIFLHGNKVIEHPCNEENPGKFLFDVVPGGERDRMTANHESYLLMASTQNDMEDWVKSIRRVIWGPFGGGIFGQKLEDTVRYEKRYGNRLAPMLVEQCVDFIRQRGLKEEGLFRLPGQANLVKELQDAFDCGEKPSFDSNTDVHTVASLLKLYLRELPEPVVPYAKYEDFLSCATLLSKEEEAGVKELMKQVKSLPVVNYNLLKYICRFLDEVQSYSGVNKMSAQNLATVFGPNILRPKVEDPLTIMEGTVVVQQLMSVMISKHDRLFPKDTEPQSKPQDGPNSNNNDGHKKATMGQLQNKENNNTKESPVRRCSWDKPESPQRSSVDNGSPTALSGSKTNSPRNSIHKLDISRSPPLMVKKNPAFNKGSGIVTNGSFSSSNAEGVEKPQTTPNGSLQARRTSSLKSSGTKMGTHSVQNGTVRMGILNTDTLGNSLNGRSMSWLPNGYVTLRDNKQKEPAGESGQHNRLSTYDNVHQQFSSMSLDDKHSVDSATWSTSSCEISLPENSNSCRSSTTTCPEQDFYVGNFEDPVLDGPPQDDLSHPGDYENKSDRRSVGGRSSRATSSSDNSETFVGNTSSNHSALHSLVSSLKQEMTKQKIEYESRIKSLEQRNLTLETEMLSLHDELDQERKKFTMIEIKMRNAERAKEDAEKRNDMLQKEMEQFFSTFGDLTVEPRRSERGNTIWIQ</sequence>
<evidence type="ECO:0000250" key="1"/>
<evidence type="ECO:0000250" key="2">
    <source>
        <dbReference type="UniProtKB" id="Q5U2Z7"/>
    </source>
</evidence>
<evidence type="ECO:0000250" key="3">
    <source>
        <dbReference type="UniProtKB" id="Q8N264"/>
    </source>
</evidence>
<evidence type="ECO:0000255" key="4"/>
<evidence type="ECO:0000255" key="5">
    <source>
        <dbReference type="PROSITE-ProRule" id="PRU00145"/>
    </source>
</evidence>
<evidence type="ECO:0000255" key="6">
    <source>
        <dbReference type="PROSITE-ProRule" id="PRU00172"/>
    </source>
</evidence>
<evidence type="ECO:0000256" key="7">
    <source>
        <dbReference type="SAM" id="MobiDB-lite"/>
    </source>
</evidence>
<evidence type="ECO:0000303" key="8">
    <source>
    </source>
</evidence>
<evidence type="ECO:0000303" key="9">
    <source>
    </source>
</evidence>
<evidence type="ECO:0000305" key="10"/>
<evidence type="ECO:0007744" key="11">
    <source>
    </source>
</evidence>
<evidence type="ECO:0007744" key="12">
    <source>
    </source>
</evidence>
<comment type="function">
    <text evidence="1">Rho GTPase-activating protein involved in cell polarity, cell morphology and cytoskeletal organization. Acts as a GTPase activator for the Rac-type GTPase by converting it to an inactive GDP-bound state. Controls actin remodeling by inactivating Rac downstream of Rho leading to suppress leading edge protrusion and promotes cell retraction to achieve cellular polarity. Able to suppress RAC1 and CDC42 activity in vitro. Overexpression induces cell rounding with partial or complete disruption of actin stress fibers and formation of membrane ruffles, lamellipodia, and filopodia. Isoform 2 is a vascular cell-specific GAP involved in modulation of angiogenesis (By similarity).</text>
</comment>
<comment type="subunit">
    <text evidence="1">Interacts with FLNA.</text>
</comment>
<comment type="subcellular location">
    <subcellularLocation>
        <location evidence="1">Cytoplasm</location>
        <location evidence="1">Cytoskeleton</location>
    </subcellularLocation>
    <subcellularLocation>
        <location evidence="1">Cell junction</location>
        <location evidence="1">Adherens junction</location>
    </subcellularLocation>
    <subcellularLocation>
        <location evidence="1">Cell junction</location>
        <location evidence="1">Focal adhesion</location>
    </subcellularLocation>
    <subcellularLocation>
        <location evidence="1">Cell projection</location>
    </subcellularLocation>
    <text evidence="1">Localizes to actin stress fibers. In migrating cells, localizes to membrane lamellae and protusions (By similarity).</text>
</comment>
<comment type="alternative products">
    <event type="alternative splicing"/>
    <isoform>
        <id>Q8C4V1-1</id>
        <name>1</name>
        <sequence type="displayed"/>
    </isoform>
    <isoform>
        <id>Q8C4V1-2</id>
        <name>2</name>
        <sequence type="described" ref="VSP_023720 VSP_023721"/>
    </isoform>
    <isoform>
        <id>Q8C4V1-3</id>
        <name>3</name>
        <sequence type="described" ref="VSP_023719"/>
    </isoform>
</comment>
<comment type="domain">
    <text evidence="1">The coiled coil domain mediates the interaction with FLNA leading to its recruitment to lamellae.</text>
</comment>
<comment type="PTM">
    <text evidence="1">Phosphorylated by ROCK, leading to activate the RacGAP activity.</text>
</comment>
<comment type="sequence caution" evidence="10">
    <conflict type="erroneous initiation">
        <sequence resource="EMBL-CDS" id="BAC30402"/>
    </conflict>
</comment>